<gene>
    <name type="ordered locus">Mnod_0024</name>
</gene>
<proteinExistence type="inferred from homology"/>
<accession>B8IT13</accession>
<protein>
    <recommendedName>
        <fullName evidence="1">UPF0102 protein Mnod_0024</fullName>
    </recommendedName>
</protein>
<keyword id="KW-1185">Reference proteome</keyword>
<sequence length="129" mass="14353">MTRTDDPAARRRRATYLRGHGAERLALLALLLKGYRPLARRFAAAGGEIDLVMRRGSVIAFVEVKARPTLDAAAAAIDARKRRAFSRAARAWIARHPWSAGLTLRADAVFVAPRRWPRHLVSAFDLEPS</sequence>
<evidence type="ECO:0000255" key="1">
    <source>
        <dbReference type="HAMAP-Rule" id="MF_00048"/>
    </source>
</evidence>
<name>Y024_METNO</name>
<dbReference type="EMBL" id="CP001349">
    <property type="protein sequence ID" value="ACL55075.1"/>
    <property type="molecule type" value="Genomic_DNA"/>
</dbReference>
<dbReference type="RefSeq" id="WP_012634314.1">
    <property type="nucleotide sequence ID" value="NC_011894.1"/>
</dbReference>
<dbReference type="SMR" id="B8IT13"/>
<dbReference type="STRING" id="460265.Mnod_0024"/>
<dbReference type="KEGG" id="mno:Mnod_0024"/>
<dbReference type="eggNOG" id="COG0792">
    <property type="taxonomic scope" value="Bacteria"/>
</dbReference>
<dbReference type="HOGENOM" id="CLU_115353_0_2_5"/>
<dbReference type="OrthoDB" id="9812968at2"/>
<dbReference type="Proteomes" id="UP000008207">
    <property type="component" value="Chromosome"/>
</dbReference>
<dbReference type="GO" id="GO:0003676">
    <property type="term" value="F:nucleic acid binding"/>
    <property type="evidence" value="ECO:0007669"/>
    <property type="project" value="InterPro"/>
</dbReference>
<dbReference type="Gene3D" id="3.40.1350.10">
    <property type="match status" value="1"/>
</dbReference>
<dbReference type="HAMAP" id="MF_00048">
    <property type="entry name" value="UPF0102"/>
    <property type="match status" value="1"/>
</dbReference>
<dbReference type="InterPro" id="IPR011335">
    <property type="entry name" value="Restrct_endonuc-II-like"/>
</dbReference>
<dbReference type="InterPro" id="IPR011856">
    <property type="entry name" value="tRNA_endonuc-like_dom_sf"/>
</dbReference>
<dbReference type="InterPro" id="IPR003509">
    <property type="entry name" value="UPF0102_YraN-like"/>
</dbReference>
<dbReference type="NCBIfam" id="NF009151">
    <property type="entry name" value="PRK12497.1-5"/>
    <property type="match status" value="1"/>
</dbReference>
<dbReference type="NCBIfam" id="NF011272">
    <property type="entry name" value="PRK14679.1"/>
    <property type="match status" value="1"/>
</dbReference>
<dbReference type="PANTHER" id="PTHR34039">
    <property type="entry name" value="UPF0102 PROTEIN YRAN"/>
    <property type="match status" value="1"/>
</dbReference>
<dbReference type="PANTHER" id="PTHR34039:SF1">
    <property type="entry name" value="UPF0102 PROTEIN YRAN"/>
    <property type="match status" value="1"/>
</dbReference>
<dbReference type="Pfam" id="PF02021">
    <property type="entry name" value="UPF0102"/>
    <property type="match status" value="1"/>
</dbReference>
<dbReference type="SUPFAM" id="SSF52980">
    <property type="entry name" value="Restriction endonuclease-like"/>
    <property type="match status" value="1"/>
</dbReference>
<reference key="1">
    <citation type="submission" date="2009-01" db="EMBL/GenBank/DDBJ databases">
        <title>Complete sequence of chromosome of Methylobacterium nodulans ORS 2060.</title>
        <authorList>
            <consortium name="US DOE Joint Genome Institute"/>
            <person name="Lucas S."/>
            <person name="Copeland A."/>
            <person name="Lapidus A."/>
            <person name="Glavina del Rio T."/>
            <person name="Dalin E."/>
            <person name="Tice H."/>
            <person name="Bruce D."/>
            <person name="Goodwin L."/>
            <person name="Pitluck S."/>
            <person name="Sims D."/>
            <person name="Brettin T."/>
            <person name="Detter J.C."/>
            <person name="Han C."/>
            <person name="Larimer F."/>
            <person name="Land M."/>
            <person name="Hauser L."/>
            <person name="Kyrpides N."/>
            <person name="Ivanova N."/>
            <person name="Marx C.J."/>
            <person name="Richardson P."/>
        </authorList>
    </citation>
    <scope>NUCLEOTIDE SEQUENCE [LARGE SCALE GENOMIC DNA]</scope>
    <source>
        <strain>LMG 21967 / CNCM I-2342 / ORS 2060</strain>
    </source>
</reference>
<comment type="similarity">
    <text evidence="1">Belongs to the UPF0102 family.</text>
</comment>
<organism>
    <name type="scientific">Methylobacterium nodulans (strain LMG 21967 / CNCM I-2342 / ORS 2060)</name>
    <dbReference type="NCBI Taxonomy" id="460265"/>
    <lineage>
        <taxon>Bacteria</taxon>
        <taxon>Pseudomonadati</taxon>
        <taxon>Pseudomonadota</taxon>
        <taxon>Alphaproteobacteria</taxon>
        <taxon>Hyphomicrobiales</taxon>
        <taxon>Methylobacteriaceae</taxon>
        <taxon>Methylobacterium</taxon>
    </lineage>
</organism>
<feature type="chain" id="PRO_1000200150" description="UPF0102 protein Mnod_0024">
    <location>
        <begin position="1"/>
        <end position="129"/>
    </location>
</feature>